<gene>
    <name evidence="5" type="primary">MNN14</name>
    <name type="ordered locus">YJR061W</name>
    <name type="ORF">J1736</name>
</gene>
<proteinExistence type="evidence at protein level"/>
<comment type="function">
    <text evidence="4">Plays a role in N-glycan mannosylphosphorylation and has partially redundant function with MNN4.</text>
</comment>
<comment type="subcellular location">
    <subcellularLocation>
        <location evidence="6">Golgi apparatus membrane</location>
        <topology evidence="2">Single-pass type II membrane protein</topology>
    </subcellularLocation>
</comment>
<comment type="induction">
    <text evidence="3">Expression is repressed by RIM101.</text>
</comment>
<comment type="domain">
    <text evidence="1">The conserved DXD motif is essential for the function, which could be an indication that MNN14 has transferase activity.</text>
</comment>
<comment type="disruption phenotype">
    <text evidence="4">Eliminates N-glycan mannosylphosphorylation, when its paralog MNN4 is also deleted.</text>
</comment>
<comment type="biotechnology">
    <text evidence="4">Mannosylphosphorylated glycans are found only in fungi, including yeast, and the elimination of mannosylphosphates from glycans is a prerequisite for yeast glycoengineering to produce human-compatible glycoproteins.</text>
</comment>
<comment type="similarity">
    <text evidence="6">Belongs to the MNN4 family.</text>
</comment>
<feature type="chain" id="PRO_0000203098" description="Mannosyltransferase regulator 14">
    <location>
        <begin position="1"/>
        <end position="935"/>
    </location>
</feature>
<feature type="topological domain" description="Cytoplasmic" evidence="2">
    <location>
        <begin position="1"/>
        <end position="21"/>
    </location>
</feature>
<feature type="transmembrane region" description="Helical; Signal-anchor for type II membrane protein" evidence="2">
    <location>
        <begin position="22"/>
        <end position="42"/>
    </location>
</feature>
<feature type="topological domain" description="Lumenal" evidence="2">
    <location>
        <begin position="43"/>
        <end position="935"/>
    </location>
</feature>
<feature type="short sequence motif" description="DXD" evidence="1">
    <location>
        <begin position="498"/>
        <end position="500"/>
    </location>
</feature>
<feature type="sequence conflict" description="In Ref. 2; AAB59321." evidence="6" ref="2">
    <original>E</original>
    <variation>K</variation>
    <location>
        <position position="197"/>
    </location>
</feature>
<feature type="sequence conflict" description="In Ref. 2; AAB59321." evidence="6" ref="2">
    <original>N</original>
    <variation>Y</variation>
    <location>
        <position position="312"/>
    </location>
</feature>
<reference key="1">
    <citation type="journal article" date="1996" name="Yeast">
        <title>Analysis of a 62 kb DNA sequence of chromosome X reveals 36 open reading frames and a gene cluster with a counterpart on chromosome XI.</title>
        <authorList>
            <person name="Huang M.-E."/>
            <person name="Manus V."/>
            <person name="Chuat J.-C."/>
            <person name="Galibert F."/>
        </authorList>
    </citation>
    <scope>NUCLEOTIDE SEQUENCE [GENOMIC DNA]</scope>
    <source>
        <strain>ATCC 204508 / S288c</strain>
    </source>
</reference>
<reference key="2">
    <citation type="journal article" date="1996" name="EMBO J.">
        <title>Complete nucleotide sequence of Saccharomyces cerevisiae chromosome X.</title>
        <authorList>
            <person name="Galibert F."/>
            <person name="Alexandraki D."/>
            <person name="Baur A."/>
            <person name="Boles E."/>
            <person name="Chalwatzis N."/>
            <person name="Chuat J.-C."/>
            <person name="Coster F."/>
            <person name="Cziepluch C."/>
            <person name="de Haan M."/>
            <person name="Domdey H."/>
            <person name="Durand P."/>
            <person name="Entian K.-D."/>
            <person name="Gatius M."/>
            <person name="Goffeau A."/>
            <person name="Grivell L.A."/>
            <person name="Hennemann A."/>
            <person name="Herbert C.J."/>
            <person name="Heumann K."/>
            <person name="Hilger F."/>
            <person name="Hollenberg C.P."/>
            <person name="Huang M.-E."/>
            <person name="Jacq C."/>
            <person name="Jauniaux J.-C."/>
            <person name="Katsoulou C."/>
            <person name="Kirchrath L."/>
            <person name="Kleine K."/>
            <person name="Kordes E."/>
            <person name="Koetter P."/>
            <person name="Liebl S."/>
            <person name="Louis E.J."/>
            <person name="Manus V."/>
            <person name="Mewes H.-W."/>
            <person name="Miosga T."/>
            <person name="Obermaier B."/>
            <person name="Perea J."/>
            <person name="Pohl T.M."/>
            <person name="Portetelle D."/>
            <person name="Pujol A."/>
            <person name="Purnelle B."/>
            <person name="Ramezani Rad M."/>
            <person name="Rasmussen S.W."/>
            <person name="Rose M."/>
            <person name="Rossau R."/>
            <person name="Schaaff-Gerstenschlaeger I."/>
            <person name="Smits P.H.M."/>
            <person name="Scarcez T."/>
            <person name="Soriano N."/>
            <person name="To Van D."/>
            <person name="Tzermia M."/>
            <person name="Van Broekhoven A."/>
            <person name="Vandenbol M."/>
            <person name="Wedler H."/>
            <person name="von Wettstein D."/>
            <person name="Wambutt R."/>
            <person name="Zagulski M."/>
            <person name="Zollner A."/>
            <person name="Karpfinger-Hartl L."/>
        </authorList>
    </citation>
    <scope>NUCLEOTIDE SEQUENCE [LARGE SCALE GENOMIC DNA]</scope>
    <source>
        <strain>ATCC 204508 / S288c</strain>
    </source>
</reference>
<reference key="3">
    <citation type="journal article" date="2014" name="G3 (Bethesda)">
        <title>The reference genome sequence of Saccharomyces cerevisiae: Then and now.</title>
        <authorList>
            <person name="Engel S.R."/>
            <person name="Dietrich F.S."/>
            <person name="Fisk D.G."/>
            <person name="Binkley G."/>
            <person name="Balakrishnan R."/>
            <person name="Costanzo M.C."/>
            <person name="Dwight S.S."/>
            <person name="Hitz B.C."/>
            <person name="Karra K."/>
            <person name="Nash R.S."/>
            <person name="Weng S."/>
            <person name="Wong E.D."/>
            <person name="Lloyd P."/>
            <person name="Skrzypek M.S."/>
            <person name="Miyasato S.R."/>
            <person name="Simison M."/>
            <person name="Cherry J.M."/>
        </authorList>
    </citation>
    <scope>GENOME REANNOTATION</scope>
    <source>
        <strain>ATCC 204508 / S288c</strain>
    </source>
</reference>
<reference key="4">
    <citation type="journal article" date="1995" name="J. Biol. Chem.">
        <title>Yeast N-terminal amidase. A new enzyme and component of the N-end rule pathway.</title>
        <authorList>
            <person name="Baker R.T."/>
            <person name="Varshavsky A."/>
        </authorList>
    </citation>
    <scope>NUCLEOTIDE SEQUENCE [GENOMIC DNA] OF 197-935</scope>
</reference>
<reference key="5">
    <citation type="journal article" date="2003" name="Mol. Cell. Biol.">
        <title>The transcription factor Rim101p governs ion tolerance and cell differentiation by direct repression of the regulatory genes NRG1 and SMP1 in Saccharomyces cerevisiae.</title>
        <authorList>
            <person name="Lamb T.M."/>
            <person name="Mitchell A.P."/>
        </authorList>
    </citation>
    <scope>INDUCTION</scope>
</reference>
<reference key="6">
    <citation type="journal article" date="2017" name="Appl. Microbiol. Biotechnol.">
        <title>Abolishment of N-glycan mannosylphosphorylation in glyco-engineered Saccharomyces cerevisiae by double disruption of MNN4 and MNN14 genes.</title>
        <authorList>
            <person name="Kim Y.H."/>
            <person name="Kang J.Y."/>
            <person name="Gil J.Y."/>
            <person name="Kim S.Y."/>
            <person name="Shin K.K."/>
            <person name="Kang H.A."/>
            <person name="Kim J.Y."/>
            <person name="Kwon O."/>
            <person name="Oh D.B."/>
        </authorList>
    </citation>
    <scope>FUNCTION</scope>
    <scope>DISRUPTION PHENOTYPE</scope>
    <scope>BIOTECHNOLOGY</scope>
</reference>
<accession>P40355</accession>
<accession>D6VWN2</accession>
<name>MNN14_YEAST</name>
<keyword id="KW-0333">Golgi apparatus</keyword>
<keyword id="KW-0472">Membrane</keyword>
<keyword id="KW-1185">Reference proteome</keyword>
<keyword id="KW-0735">Signal-anchor</keyword>
<keyword id="KW-0812">Transmembrane</keyword>
<keyword id="KW-1133">Transmembrane helix</keyword>
<organism>
    <name type="scientific">Saccharomyces cerevisiae (strain ATCC 204508 / S288c)</name>
    <name type="common">Baker's yeast</name>
    <dbReference type="NCBI Taxonomy" id="559292"/>
    <lineage>
        <taxon>Eukaryota</taxon>
        <taxon>Fungi</taxon>
        <taxon>Dikarya</taxon>
        <taxon>Ascomycota</taxon>
        <taxon>Saccharomycotina</taxon>
        <taxon>Saccharomycetes</taxon>
        <taxon>Saccharomycetales</taxon>
        <taxon>Saccharomycetaceae</taxon>
        <taxon>Saccharomyces</taxon>
    </lineage>
</organism>
<sequence length="935" mass="108427">MMLSLRRFSMYVLRSLRLHFKKIIITLLTIQLLFITIFVLGGRSSIIDGNWKSFMALFFKPLAYTNRNNNHASFDLRSKDNVAKLYEKMNFDTSGKWIDTYTLKNNLLTVKMGPEKGQVLDSVDELRYYDNDPRLVWSVLLDHLLESDSNEYAFSWYDWANFDSTNKLIALRHTNISCQFVCEGAFDKNVLEMVESEVQEPLFVTNRNKYDESLWYNRVRKVVDSNSVQQAIHDHCMNNDAYSNGTPFELPFIISEISERLRPEVYDLQAKNHLLYSNFTPLSLTVLDSDKDAYRINLKTTDSSKSNIVQTNLLQNYIKRHRNEMVNGDLIFNHTSMFEKFLHHGSTKKRKLDVEALDKTIYAGEYLELSPSDFQFNAKERIIELETRLRSEGLPSHDTHYLRSLKTSVNTSPALQQKYFAEASDITDATADGHHRDRRFFSIGHNLLNDPQEFEARLNSLIRNFQKFVKANGLISWLSHGTLYGYLYDGLKFPWDVDHDLQMPIKHLHYLSQYFNQSLILEDPREGNGRFLLDVGSAITVGVHGNGENNIDARFIDIDSGIYIDITGLSVSSDAAKQYMSKFVEEESSGESFSALIEDYKFDENDYFDEVDGREGLAKYTIHELMEWVNSHPDDFTDAEKNLVTKTYKKELAISRSDYAEKDLSPKQRYLVNEKYNLYNCRNQHFSSLNIISPLRNTMFSGVSAFVPNRPIATLNNEYKVPAKYGLLSFQGKVYLPEFRYWFSFADMKKFANLQLKEPKITRLESPLNDLKFSDISLLITNILKCGFHSVFASLFNSFDSTVYRLKELEIQYDPSLSEEEKSSLLKTLRRGMSKKIKSPEKDPIIYIYERKLWENVEKLLNASNIYNIASQVEKEKGKEFVERSQQVYERNFDGFRLPDGGNSKTVNDLNSKGLNLFGDNKKTSNNIFGSDQKY</sequence>
<protein>
    <recommendedName>
        <fullName evidence="5">Mannosyltransferase regulator 14</fullName>
    </recommendedName>
</protein>
<dbReference type="EMBL" id="Z49561">
    <property type="protein sequence ID" value="CAA89589.1"/>
    <property type="molecule type" value="Genomic_DNA"/>
</dbReference>
<dbReference type="EMBL" id="L47993">
    <property type="protein sequence ID" value="AAB39287.1"/>
    <property type="molecule type" value="Genomic_DNA"/>
</dbReference>
<dbReference type="EMBL" id="L35564">
    <property type="protein sequence ID" value="AAB59321.1"/>
    <property type="molecule type" value="Genomic_DNA"/>
</dbReference>
<dbReference type="EMBL" id="BK006943">
    <property type="protein sequence ID" value="DAA08848.1"/>
    <property type="molecule type" value="Genomic_DNA"/>
</dbReference>
<dbReference type="PIR" id="S57080">
    <property type="entry name" value="S57080"/>
</dbReference>
<dbReference type="RefSeq" id="NP_012595.1">
    <property type="nucleotide sequence ID" value="NM_001181719.1"/>
</dbReference>
<dbReference type="BioGRID" id="33818">
    <property type="interactions" value="38"/>
</dbReference>
<dbReference type="DIP" id="DIP-2974N"/>
<dbReference type="FunCoup" id="P40355">
    <property type="interactions" value="5"/>
</dbReference>
<dbReference type="IntAct" id="P40355">
    <property type="interactions" value="3"/>
</dbReference>
<dbReference type="MINT" id="P40355"/>
<dbReference type="STRING" id="4932.YJR061W"/>
<dbReference type="GlyGen" id="P40355">
    <property type="glycosylation" value="1 site"/>
</dbReference>
<dbReference type="PaxDb" id="4932-YJR061W"/>
<dbReference type="PeptideAtlas" id="P40355"/>
<dbReference type="EnsemblFungi" id="YJR061W_mRNA">
    <property type="protein sequence ID" value="YJR061W"/>
    <property type="gene ID" value="YJR061W"/>
</dbReference>
<dbReference type="GeneID" id="853524"/>
<dbReference type="KEGG" id="sce:YJR061W"/>
<dbReference type="AGR" id="SGD:S000003822"/>
<dbReference type="SGD" id="S000003822">
    <property type="gene designation" value="MNN14"/>
</dbReference>
<dbReference type="VEuPathDB" id="FungiDB:YJR061W"/>
<dbReference type="eggNOG" id="ENOG502QREF">
    <property type="taxonomic scope" value="Eukaryota"/>
</dbReference>
<dbReference type="GeneTree" id="ENSGT00390000014471"/>
<dbReference type="HOGENOM" id="CLU_008074_0_0_1"/>
<dbReference type="InParanoid" id="P40355"/>
<dbReference type="OMA" id="YTIHELM"/>
<dbReference type="OrthoDB" id="444255at2759"/>
<dbReference type="BioCyc" id="MetaCyc:G3O-31694-MONOMER"/>
<dbReference type="BioCyc" id="YEAST:G3O-31694-MONOMER"/>
<dbReference type="BioGRID-ORCS" id="853524">
    <property type="hits" value="1 hit in 10 CRISPR screens"/>
</dbReference>
<dbReference type="PRO" id="PR:P40355"/>
<dbReference type="Proteomes" id="UP000002311">
    <property type="component" value="Chromosome X"/>
</dbReference>
<dbReference type="RNAct" id="P40355">
    <property type="molecule type" value="protein"/>
</dbReference>
<dbReference type="GO" id="GO:0000139">
    <property type="term" value="C:Golgi membrane"/>
    <property type="evidence" value="ECO:0007669"/>
    <property type="project" value="UniProtKB-SubCell"/>
</dbReference>
<dbReference type="GO" id="GO:0006491">
    <property type="term" value="P:N-glycan processing"/>
    <property type="evidence" value="ECO:0000316"/>
    <property type="project" value="SGD"/>
</dbReference>
<dbReference type="GO" id="GO:0006486">
    <property type="term" value="P:protein glycosylation"/>
    <property type="evidence" value="ECO:0000318"/>
    <property type="project" value="GO_Central"/>
</dbReference>
<dbReference type="InterPro" id="IPR009644">
    <property type="entry name" value="FKTN-rel"/>
</dbReference>
<dbReference type="InterPro" id="IPR007074">
    <property type="entry name" value="LicD/FKTN/FKRP_NTP_transf"/>
</dbReference>
<dbReference type="PANTHER" id="PTHR15407">
    <property type="entry name" value="FUKUTIN-RELATED"/>
    <property type="match status" value="1"/>
</dbReference>
<dbReference type="PANTHER" id="PTHR15407:SF28">
    <property type="entry name" value="RIBITOL-5-PHOSPHATE TRANSFERASE FKTN"/>
    <property type="match status" value="1"/>
</dbReference>
<dbReference type="Pfam" id="PF04991">
    <property type="entry name" value="LicD"/>
    <property type="match status" value="1"/>
</dbReference>
<evidence type="ECO:0000250" key="1">
    <source>
        <dbReference type="UniProtKB" id="P36044"/>
    </source>
</evidence>
<evidence type="ECO:0000255" key="2"/>
<evidence type="ECO:0000269" key="3">
    <source>
    </source>
</evidence>
<evidence type="ECO:0000269" key="4">
    <source>
    </source>
</evidence>
<evidence type="ECO:0000303" key="5">
    <source>
    </source>
</evidence>
<evidence type="ECO:0000305" key="6"/>